<organism>
    <name type="scientific">Nicotiana tabacum</name>
    <name type="common">Common tobacco</name>
    <dbReference type="NCBI Taxonomy" id="4097"/>
    <lineage>
        <taxon>Eukaryota</taxon>
        <taxon>Viridiplantae</taxon>
        <taxon>Streptophyta</taxon>
        <taxon>Embryophyta</taxon>
        <taxon>Tracheophyta</taxon>
        <taxon>Spermatophyta</taxon>
        <taxon>Magnoliopsida</taxon>
        <taxon>eudicotyledons</taxon>
        <taxon>Gunneridae</taxon>
        <taxon>Pentapetalae</taxon>
        <taxon>asterids</taxon>
        <taxon>lamiids</taxon>
        <taxon>Solanales</taxon>
        <taxon>Solanaceae</taxon>
        <taxon>Nicotianoideae</taxon>
        <taxon>Nicotianeae</taxon>
        <taxon>Nicotiana</taxon>
    </lineage>
</organism>
<name>NU2C1_TOBAC</name>
<comment type="function">
    <text evidence="1">NDH shuttles electrons from NAD(P)H:plastoquinone, via FMN and iron-sulfur (Fe-S) centers, to quinones in the photosynthetic chain and possibly in a chloroplast respiratory chain. The immediate electron acceptor for the enzyme in this species is believed to be plastoquinone. Couples the redox reaction to proton translocation, and thus conserves the redox energy in a proton gradient.</text>
</comment>
<comment type="catalytic activity">
    <reaction evidence="1">
        <text>a plastoquinone + NADH + (n+1) H(+)(in) = a plastoquinol + NAD(+) + n H(+)(out)</text>
        <dbReference type="Rhea" id="RHEA:42608"/>
        <dbReference type="Rhea" id="RHEA-COMP:9561"/>
        <dbReference type="Rhea" id="RHEA-COMP:9562"/>
        <dbReference type="ChEBI" id="CHEBI:15378"/>
        <dbReference type="ChEBI" id="CHEBI:17757"/>
        <dbReference type="ChEBI" id="CHEBI:57540"/>
        <dbReference type="ChEBI" id="CHEBI:57945"/>
        <dbReference type="ChEBI" id="CHEBI:62192"/>
    </reaction>
</comment>
<comment type="catalytic activity">
    <reaction evidence="1">
        <text>a plastoquinone + NADPH + (n+1) H(+)(in) = a plastoquinol + NADP(+) + n H(+)(out)</text>
        <dbReference type="Rhea" id="RHEA:42612"/>
        <dbReference type="Rhea" id="RHEA-COMP:9561"/>
        <dbReference type="Rhea" id="RHEA-COMP:9562"/>
        <dbReference type="ChEBI" id="CHEBI:15378"/>
        <dbReference type="ChEBI" id="CHEBI:17757"/>
        <dbReference type="ChEBI" id="CHEBI:57783"/>
        <dbReference type="ChEBI" id="CHEBI:58349"/>
        <dbReference type="ChEBI" id="CHEBI:62192"/>
    </reaction>
</comment>
<comment type="subunit">
    <text evidence="1">NDH is composed of at least 16 different subunits, 5 of which are encoded in the nucleus.</text>
</comment>
<comment type="subcellular location">
    <subcellularLocation>
        <location evidence="1">Plastid</location>
        <location evidence="1">Chloroplast thylakoid membrane</location>
        <topology evidence="1">Multi-pass membrane protein</topology>
    </subcellularLocation>
</comment>
<comment type="RNA editing">
    <location>
        <position position="50" evidence="2"/>
    </location>
    <location>
        <position position="156" evidence="2"/>
    </location>
    <location>
        <position position="196" evidence="2"/>
    </location>
    <location>
        <position position="204" evidence="2"/>
    </location>
    <location>
        <position position="246" evidence="2"/>
    </location>
    <location>
        <position position="249" evidence="2"/>
    </location>
    <location>
        <position position="277" evidence="2"/>
    </location>
    <location>
        <position position="279" evidence="2"/>
    </location>
    <location>
        <position position="494" evidence="2"/>
    </location>
</comment>
<comment type="similarity">
    <text evidence="1">Belongs to the complex I subunit 2 family.</text>
</comment>
<dbReference type="EC" id="7.1.1.-" evidence="1"/>
<dbReference type="EMBL" id="Z00044">
    <property type="protein sequence ID" value="CAA77428.1"/>
    <property type="status" value="ALT_SEQ"/>
    <property type="molecule type" value="Genomic_DNA"/>
</dbReference>
<dbReference type="PIR" id="A00420">
    <property type="entry name" value="DENTN2"/>
</dbReference>
<dbReference type="SMR" id="P0CC98"/>
<dbReference type="KEGG" id="nta:800509"/>
<dbReference type="KEGG" id="nta:800511"/>
<dbReference type="OrthoDB" id="1712451at2759"/>
<dbReference type="Proteomes" id="UP000084051">
    <property type="component" value="Unplaced"/>
</dbReference>
<dbReference type="GO" id="GO:0009535">
    <property type="term" value="C:chloroplast thylakoid membrane"/>
    <property type="evidence" value="ECO:0007669"/>
    <property type="project" value="UniProtKB-SubCell"/>
</dbReference>
<dbReference type="GO" id="GO:0008137">
    <property type="term" value="F:NADH dehydrogenase (ubiquinone) activity"/>
    <property type="evidence" value="ECO:0007669"/>
    <property type="project" value="InterPro"/>
</dbReference>
<dbReference type="GO" id="GO:0048038">
    <property type="term" value="F:quinone binding"/>
    <property type="evidence" value="ECO:0007669"/>
    <property type="project" value="UniProtKB-KW"/>
</dbReference>
<dbReference type="GO" id="GO:0042773">
    <property type="term" value="P:ATP synthesis coupled electron transport"/>
    <property type="evidence" value="ECO:0007669"/>
    <property type="project" value="InterPro"/>
</dbReference>
<dbReference type="GO" id="GO:0019684">
    <property type="term" value="P:photosynthesis, light reaction"/>
    <property type="evidence" value="ECO:0007669"/>
    <property type="project" value="UniProtKB-UniRule"/>
</dbReference>
<dbReference type="HAMAP" id="MF_00445">
    <property type="entry name" value="NDH1_NuoN_1"/>
    <property type="match status" value="1"/>
</dbReference>
<dbReference type="InterPro" id="IPR010096">
    <property type="entry name" value="NADH-Q_OxRdtase_suN/2"/>
</dbReference>
<dbReference type="InterPro" id="IPR001750">
    <property type="entry name" value="ND/Mrp_TM"/>
</dbReference>
<dbReference type="InterPro" id="IPR045693">
    <property type="entry name" value="Ndh2_N"/>
</dbReference>
<dbReference type="NCBIfam" id="TIGR01770">
    <property type="entry name" value="NDH_I_N"/>
    <property type="match status" value="1"/>
</dbReference>
<dbReference type="NCBIfam" id="NF002701">
    <property type="entry name" value="PRK02504.1"/>
    <property type="match status" value="1"/>
</dbReference>
<dbReference type="PANTHER" id="PTHR22773">
    <property type="entry name" value="NADH DEHYDROGENASE"/>
    <property type="match status" value="1"/>
</dbReference>
<dbReference type="Pfam" id="PF19530">
    <property type="entry name" value="Ndh2_N"/>
    <property type="match status" value="1"/>
</dbReference>
<dbReference type="Pfam" id="PF00361">
    <property type="entry name" value="Proton_antipo_M"/>
    <property type="match status" value="1"/>
</dbReference>
<dbReference type="PRINTS" id="PR01434">
    <property type="entry name" value="NADHDHGNASE5"/>
</dbReference>
<geneLocation type="chloroplast"/>
<reference key="1">
    <citation type="journal article" date="1986" name="EMBO J.">
        <title>The complete nucleotide sequence of the tobacco chloroplast genome: its gene organization and expression.</title>
        <authorList>
            <person name="Shinozaki K."/>
            <person name="Ohme M."/>
            <person name="Tanaka M."/>
            <person name="Wakasugi T."/>
            <person name="Hayashida N."/>
            <person name="Matsubayashi T."/>
            <person name="Zaita N."/>
            <person name="Chunwongse J."/>
            <person name="Obokata J."/>
            <person name="Yamaguchi-Shinozaki K."/>
            <person name="Ohto C."/>
            <person name="Torazawa K."/>
            <person name="Meng B.-Y."/>
            <person name="Sugita M."/>
            <person name="Deno H."/>
            <person name="Kamogashira T."/>
            <person name="Yamada K."/>
            <person name="Kusuda J."/>
            <person name="Takaiwa F."/>
            <person name="Kato A."/>
            <person name="Tohdoh N."/>
            <person name="Shimada H."/>
            <person name="Sugiura M."/>
        </authorList>
    </citation>
    <scope>NUCLEOTIDE SEQUENCE [LARGE SCALE GENOMIC DNA]</scope>
    <source>
        <strain>cv. Bright Yellow 4</strain>
    </source>
</reference>
<reference key="2">
    <citation type="submission" date="1998-02" db="EMBL/GenBank/DDBJ databases">
        <authorList>
            <person name="Sugiura M."/>
        </authorList>
    </citation>
    <scope>SEQUENCE REVISION</scope>
</reference>
<reference key="3">
    <citation type="journal article" date="1995" name="Plant Mol. Biol.">
        <title>Editing of the chloroplast ndhB encoded transcript shows divergence between closely related members of the grass family (Poaceae).</title>
        <authorList>
            <person name="Freyer R."/>
            <person name="Lopez C."/>
            <person name="Maier R.M."/>
            <person name="Martin M."/>
            <person name="Sabater B."/>
            <person name="Koessel H."/>
        </authorList>
    </citation>
    <scope>NUCLEOTIDE SEQUENCE [GENOMIC DNA]</scope>
    <scope>RNA EDITING</scope>
</reference>
<accession>P0CC98</accession>
<accession>P06256</accession>
<accession>Q32720</accession>
<protein>
    <recommendedName>
        <fullName evidence="1">NAD(P)H-quinone oxidoreductase subunit 2 A, chloroplastic</fullName>
        <ecNumber evidence="1">7.1.1.-</ecNumber>
    </recommendedName>
    <alternativeName>
        <fullName evidence="1">NAD(P)H dehydrogenase, subunit 2 A</fullName>
    </alternativeName>
    <alternativeName>
        <fullName evidence="1">NADH-plastoquinone oxidoreductase subunit 2 A</fullName>
    </alternativeName>
</protein>
<evidence type="ECO:0000255" key="1">
    <source>
        <dbReference type="HAMAP-Rule" id="MF_00445"/>
    </source>
</evidence>
<evidence type="ECO:0000269" key="2">
    <source>
    </source>
</evidence>
<keyword id="KW-0150">Chloroplast</keyword>
<keyword id="KW-0472">Membrane</keyword>
<keyword id="KW-0520">NAD</keyword>
<keyword id="KW-0521">NADP</keyword>
<keyword id="KW-0934">Plastid</keyword>
<keyword id="KW-0618">Plastoquinone</keyword>
<keyword id="KW-0874">Quinone</keyword>
<keyword id="KW-1185">Reference proteome</keyword>
<keyword id="KW-0691">RNA editing</keyword>
<keyword id="KW-0793">Thylakoid</keyword>
<keyword id="KW-1278">Translocase</keyword>
<keyword id="KW-0812">Transmembrane</keyword>
<keyword id="KW-1133">Transmembrane helix</keyword>
<keyword id="KW-0813">Transport</keyword>
<feature type="chain" id="PRO_0000117680" description="NAD(P)H-quinone oxidoreductase subunit 2 A, chloroplastic">
    <location>
        <begin position="1"/>
        <end position="510"/>
    </location>
</feature>
<feature type="transmembrane region" description="Helical" evidence="1">
    <location>
        <begin position="31"/>
        <end position="51"/>
    </location>
</feature>
<feature type="transmembrane region" description="Helical" evidence="1">
    <location>
        <begin position="57"/>
        <end position="77"/>
    </location>
</feature>
<feature type="transmembrane region" description="Helical" evidence="1">
    <location>
        <begin position="99"/>
        <end position="119"/>
    </location>
</feature>
<feature type="transmembrane region" description="Helical" evidence="1">
    <location>
        <begin position="124"/>
        <end position="144"/>
    </location>
</feature>
<feature type="transmembrane region" description="Helical" evidence="1">
    <location>
        <begin position="149"/>
        <end position="169"/>
    </location>
</feature>
<feature type="transmembrane region" description="Helical" evidence="1">
    <location>
        <begin position="184"/>
        <end position="204"/>
    </location>
</feature>
<feature type="transmembrane region" description="Helical" evidence="1">
    <location>
        <begin position="229"/>
        <end position="249"/>
    </location>
</feature>
<feature type="transmembrane region" description="Helical" evidence="1">
    <location>
        <begin position="261"/>
        <end position="281"/>
    </location>
</feature>
<feature type="transmembrane region" description="Helical" evidence="1">
    <location>
        <begin position="295"/>
        <end position="315"/>
    </location>
</feature>
<feature type="transmembrane region" description="Helical" evidence="1">
    <location>
        <begin position="323"/>
        <end position="343"/>
    </location>
</feature>
<feature type="transmembrane region" description="Helical" evidence="1">
    <location>
        <begin position="354"/>
        <end position="374"/>
    </location>
</feature>
<feature type="transmembrane region" description="Helical" evidence="1">
    <location>
        <begin position="395"/>
        <end position="415"/>
    </location>
</feature>
<feature type="transmembrane region" description="Helical" evidence="1">
    <location>
        <begin position="418"/>
        <end position="438"/>
    </location>
</feature>
<feature type="transmembrane region" description="Helical" evidence="1">
    <location>
        <begin position="484"/>
        <end position="504"/>
    </location>
</feature>
<proteinExistence type="evidence at transcript level"/>
<sequence length="510" mass="56883">MIWHVQNENFILDSTRIFMKAFHLLLFDGSLIFPECILIFGLILLLMIDLTSDQKDIPWLYFISSTSLVMSITALLFRWREEPMISFSGNFQTNNFNEIFQFLILLCSTLCIPLSVEYIECTEMAITEFLLFVLTATLGGMFLCGANDLITIFVALECFSLCSYLLSGYTKKDVRSNEATMKYLLMGGASSSILVYGFSWLYGLSGGEIELQEIVNGLINTQMYNSPGISIALIFITVGIGFKLSLAPFHQWTPDVYEGSPTPVVAFLSVTSKVAALALATRIFDIPFYFSSNEWHLLLEILAILSMILGNLIAITQTSMKRMLAYSSIGQIGYVIIGIIVGDSNDGYASMITYMLFYISMNLGTFACIVLFGLRTGTDNIRDYAGLYTKDPFLALSLALCLLSLGGLPPLAGFFGKLYLFWCGWQAGLYFLVLIGLLTSVVSIYYYLKIIKLLMTGRNQEITPHVRNYRRSPLRSNNSIELSMIVCVIASTILGISMNPIIAIAQDSLF</sequence>
<gene>
    <name evidence="1" type="primary">ndhB1</name>
    <name type="synonym">ndh2-A</name>
</gene>